<sequence>MTKQTEYKRKPEWLKIKLNTNENYTGLKKMMRSKNLHTVCEEAKCPNIHECWAVRKTATFMILGAVCTRACRFCAVKTGLPTELDLQEPERVADSVVQMGLKHVVITAVARDDLKDGGAAVFAETVRAVRRKNPFTSIEVLPSDMGGVEENLKMLMDAKPDILNHNIETVRRLSNRVRARAKYDRSLEFLRRAKEMQPDIPTKSSIMVGLGETREDLIEAMDDLRANNVDILTLGQYLQPSKKHLPVLKYYPPAEFAELKEIALSKGFSHCEAGPLVRSSYHADEQVRSAKEKTAEAK</sequence>
<organism>
    <name type="scientific">Bacillus thuringiensis subsp. konkukian (strain 97-27)</name>
    <dbReference type="NCBI Taxonomy" id="281309"/>
    <lineage>
        <taxon>Bacteria</taxon>
        <taxon>Bacillati</taxon>
        <taxon>Bacillota</taxon>
        <taxon>Bacilli</taxon>
        <taxon>Bacillales</taxon>
        <taxon>Bacillaceae</taxon>
        <taxon>Bacillus</taxon>
        <taxon>Bacillus cereus group</taxon>
    </lineage>
</organism>
<protein>
    <recommendedName>
        <fullName evidence="1">Lipoyl synthase</fullName>
        <ecNumber evidence="1">2.8.1.8</ecNumber>
    </recommendedName>
    <alternativeName>
        <fullName evidence="1">Lip-syn</fullName>
        <shortName evidence="1">LS</shortName>
    </alternativeName>
    <alternativeName>
        <fullName evidence="1">Lipoate synthase</fullName>
    </alternativeName>
    <alternativeName>
        <fullName evidence="1">Lipoic acid synthase</fullName>
    </alternativeName>
    <alternativeName>
        <fullName evidence="1">Sulfur insertion protein LipA</fullName>
    </alternativeName>
</protein>
<accession>Q6HBT4</accession>
<proteinExistence type="inferred from homology"/>
<evidence type="ECO:0000255" key="1">
    <source>
        <dbReference type="HAMAP-Rule" id="MF_00206"/>
    </source>
</evidence>
<evidence type="ECO:0000255" key="2">
    <source>
        <dbReference type="PROSITE-ProRule" id="PRU01266"/>
    </source>
</evidence>
<dbReference type="EC" id="2.8.1.8" evidence="1"/>
<dbReference type="EMBL" id="AE017355">
    <property type="protein sequence ID" value="AAT63237.1"/>
    <property type="molecule type" value="Genomic_DNA"/>
</dbReference>
<dbReference type="RefSeq" id="WP_000166375.1">
    <property type="nucleotide sequence ID" value="NC_005957.1"/>
</dbReference>
<dbReference type="RefSeq" id="YP_038992.1">
    <property type="nucleotide sequence ID" value="NC_005957.1"/>
</dbReference>
<dbReference type="SMR" id="Q6HBT4"/>
<dbReference type="GeneID" id="93006112"/>
<dbReference type="KEGG" id="btk:BT9727_4682"/>
<dbReference type="PATRIC" id="fig|281309.8.peg.4980"/>
<dbReference type="HOGENOM" id="CLU_033144_2_1_9"/>
<dbReference type="Proteomes" id="UP000001301">
    <property type="component" value="Chromosome"/>
</dbReference>
<dbReference type="GO" id="GO:0005737">
    <property type="term" value="C:cytoplasm"/>
    <property type="evidence" value="ECO:0007669"/>
    <property type="project" value="UniProtKB-SubCell"/>
</dbReference>
<dbReference type="GO" id="GO:0051539">
    <property type="term" value="F:4 iron, 4 sulfur cluster binding"/>
    <property type="evidence" value="ECO:0007669"/>
    <property type="project" value="UniProtKB-UniRule"/>
</dbReference>
<dbReference type="GO" id="GO:0016992">
    <property type="term" value="F:lipoate synthase activity"/>
    <property type="evidence" value="ECO:0007669"/>
    <property type="project" value="UniProtKB-UniRule"/>
</dbReference>
<dbReference type="GO" id="GO:0046872">
    <property type="term" value="F:metal ion binding"/>
    <property type="evidence" value="ECO:0007669"/>
    <property type="project" value="UniProtKB-KW"/>
</dbReference>
<dbReference type="CDD" id="cd01335">
    <property type="entry name" value="Radical_SAM"/>
    <property type="match status" value="1"/>
</dbReference>
<dbReference type="FunFam" id="3.20.20.70:FF:000040">
    <property type="entry name" value="Lipoyl synthase"/>
    <property type="match status" value="1"/>
</dbReference>
<dbReference type="Gene3D" id="3.20.20.70">
    <property type="entry name" value="Aldolase class I"/>
    <property type="match status" value="1"/>
</dbReference>
<dbReference type="HAMAP" id="MF_00206">
    <property type="entry name" value="Lipoyl_synth"/>
    <property type="match status" value="1"/>
</dbReference>
<dbReference type="InterPro" id="IPR013785">
    <property type="entry name" value="Aldolase_TIM"/>
</dbReference>
<dbReference type="InterPro" id="IPR006638">
    <property type="entry name" value="Elp3/MiaA/NifB-like_rSAM"/>
</dbReference>
<dbReference type="InterPro" id="IPR031691">
    <property type="entry name" value="LIAS_N"/>
</dbReference>
<dbReference type="InterPro" id="IPR003698">
    <property type="entry name" value="Lipoyl_synth"/>
</dbReference>
<dbReference type="InterPro" id="IPR007197">
    <property type="entry name" value="rSAM"/>
</dbReference>
<dbReference type="NCBIfam" id="TIGR00510">
    <property type="entry name" value="lipA"/>
    <property type="match status" value="1"/>
</dbReference>
<dbReference type="NCBIfam" id="NF004019">
    <property type="entry name" value="PRK05481.1"/>
    <property type="match status" value="1"/>
</dbReference>
<dbReference type="NCBIfam" id="NF009544">
    <property type="entry name" value="PRK12928.1"/>
    <property type="match status" value="1"/>
</dbReference>
<dbReference type="PANTHER" id="PTHR10949">
    <property type="entry name" value="LIPOYL SYNTHASE"/>
    <property type="match status" value="1"/>
</dbReference>
<dbReference type="PANTHER" id="PTHR10949:SF0">
    <property type="entry name" value="LIPOYL SYNTHASE, MITOCHONDRIAL"/>
    <property type="match status" value="1"/>
</dbReference>
<dbReference type="Pfam" id="PF16881">
    <property type="entry name" value="LIAS_N"/>
    <property type="match status" value="1"/>
</dbReference>
<dbReference type="Pfam" id="PF04055">
    <property type="entry name" value="Radical_SAM"/>
    <property type="match status" value="1"/>
</dbReference>
<dbReference type="PIRSF" id="PIRSF005963">
    <property type="entry name" value="Lipoyl_synth"/>
    <property type="match status" value="1"/>
</dbReference>
<dbReference type="SFLD" id="SFLDF00271">
    <property type="entry name" value="lipoyl_synthase"/>
    <property type="match status" value="1"/>
</dbReference>
<dbReference type="SFLD" id="SFLDG01058">
    <property type="entry name" value="lipoyl_synthase_like"/>
    <property type="match status" value="1"/>
</dbReference>
<dbReference type="SMART" id="SM00729">
    <property type="entry name" value="Elp3"/>
    <property type="match status" value="1"/>
</dbReference>
<dbReference type="SUPFAM" id="SSF102114">
    <property type="entry name" value="Radical SAM enzymes"/>
    <property type="match status" value="1"/>
</dbReference>
<dbReference type="PROSITE" id="PS51918">
    <property type="entry name" value="RADICAL_SAM"/>
    <property type="match status" value="1"/>
</dbReference>
<reference key="1">
    <citation type="journal article" date="2006" name="J. Bacteriol.">
        <title>Pathogenomic sequence analysis of Bacillus cereus and Bacillus thuringiensis isolates closely related to Bacillus anthracis.</title>
        <authorList>
            <person name="Han C.S."/>
            <person name="Xie G."/>
            <person name="Challacombe J.F."/>
            <person name="Altherr M.R."/>
            <person name="Bhotika S.S."/>
            <person name="Bruce D."/>
            <person name="Campbell C.S."/>
            <person name="Campbell M.L."/>
            <person name="Chen J."/>
            <person name="Chertkov O."/>
            <person name="Cleland C."/>
            <person name="Dimitrijevic M."/>
            <person name="Doggett N.A."/>
            <person name="Fawcett J.J."/>
            <person name="Glavina T."/>
            <person name="Goodwin L.A."/>
            <person name="Hill K.K."/>
            <person name="Hitchcock P."/>
            <person name="Jackson P.J."/>
            <person name="Keim P."/>
            <person name="Kewalramani A.R."/>
            <person name="Longmire J."/>
            <person name="Lucas S."/>
            <person name="Malfatti S."/>
            <person name="McMurry K."/>
            <person name="Meincke L.J."/>
            <person name="Misra M."/>
            <person name="Moseman B.L."/>
            <person name="Mundt M."/>
            <person name="Munk A.C."/>
            <person name="Okinaka R.T."/>
            <person name="Parson-Quintana B."/>
            <person name="Reilly L.P."/>
            <person name="Richardson P."/>
            <person name="Robinson D.L."/>
            <person name="Rubin E."/>
            <person name="Saunders E."/>
            <person name="Tapia R."/>
            <person name="Tesmer J.G."/>
            <person name="Thayer N."/>
            <person name="Thompson L.S."/>
            <person name="Tice H."/>
            <person name="Ticknor L.O."/>
            <person name="Wills P.L."/>
            <person name="Brettin T.S."/>
            <person name="Gilna P."/>
        </authorList>
    </citation>
    <scope>NUCLEOTIDE SEQUENCE [LARGE SCALE GENOMIC DNA]</scope>
    <source>
        <strain>97-27</strain>
    </source>
</reference>
<name>LIPA_BACHK</name>
<keyword id="KW-0004">4Fe-4S</keyword>
<keyword id="KW-0963">Cytoplasm</keyword>
<keyword id="KW-0408">Iron</keyword>
<keyword id="KW-0411">Iron-sulfur</keyword>
<keyword id="KW-0479">Metal-binding</keyword>
<keyword id="KW-0949">S-adenosyl-L-methionine</keyword>
<keyword id="KW-0808">Transferase</keyword>
<comment type="function">
    <text evidence="1">Catalyzes the radical-mediated insertion of two sulfur atoms into the C-6 and C-8 positions of the octanoyl moiety bound to the lipoyl domains of lipoate-dependent enzymes, thereby converting the octanoylated domains into lipoylated derivatives.</text>
</comment>
<comment type="catalytic activity">
    <reaction evidence="1">
        <text>[[Fe-S] cluster scaffold protein carrying a second [4Fe-4S](2+) cluster] + N(6)-octanoyl-L-lysyl-[protein] + 2 oxidized [2Fe-2S]-[ferredoxin] + 2 S-adenosyl-L-methionine + 4 H(+) = [[Fe-S] cluster scaffold protein] + N(6)-[(R)-dihydrolipoyl]-L-lysyl-[protein] + 4 Fe(3+) + 2 hydrogen sulfide + 2 5'-deoxyadenosine + 2 L-methionine + 2 reduced [2Fe-2S]-[ferredoxin]</text>
        <dbReference type="Rhea" id="RHEA:16585"/>
        <dbReference type="Rhea" id="RHEA-COMP:9928"/>
        <dbReference type="Rhea" id="RHEA-COMP:10000"/>
        <dbReference type="Rhea" id="RHEA-COMP:10001"/>
        <dbReference type="Rhea" id="RHEA-COMP:10475"/>
        <dbReference type="Rhea" id="RHEA-COMP:14568"/>
        <dbReference type="Rhea" id="RHEA-COMP:14569"/>
        <dbReference type="ChEBI" id="CHEBI:15378"/>
        <dbReference type="ChEBI" id="CHEBI:17319"/>
        <dbReference type="ChEBI" id="CHEBI:29034"/>
        <dbReference type="ChEBI" id="CHEBI:29919"/>
        <dbReference type="ChEBI" id="CHEBI:33722"/>
        <dbReference type="ChEBI" id="CHEBI:33737"/>
        <dbReference type="ChEBI" id="CHEBI:33738"/>
        <dbReference type="ChEBI" id="CHEBI:57844"/>
        <dbReference type="ChEBI" id="CHEBI:59789"/>
        <dbReference type="ChEBI" id="CHEBI:78809"/>
        <dbReference type="ChEBI" id="CHEBI:83100"/>
        <dbReference type="EC" id="2.8.1.8"/>
    </reaction>
</comment>
<comment type="cofactor">
    <cofactor evidence="1">
        <name>[4Fe-4S] cluster</name>
        <dbReference type="ChEBI" id="CHEBI:49883"/>
    </cofactor>
    <text evidence="1">Binds 2 [4Fe-4S] clusters per subunit. One cluster is coordinated with 3 cysteines and an exchangeable S-adenosyl-L-methionine.</text>
</comment>
<comment type="pathway">
    <text evidence="1">Protein modification; protein lipoylation via endogenous pathway; protein N(6)-(lipoyl)lysine from octanoyl-[acyl-carrier-protein].</text>
</comment>
<comment type="subcellular location">
    <subcellularLocation>
        <location evidence="1">Cytoplasm</location>
    </subcellularLocation>
</comment>
<comment type="similarity">
    <text evidence="1">Belongs to the radical SAM superfamily. Lipoyl synthase family.</text>
</comment>
<gene>
    <name evidence="1" type="primary">lipA</name>
    <name type="ordered locus">BT9727_4682</name>
</gene>
<feature type="chain" id="PRO_1000012187" description="Lipoyl synthase">
    <location>
        <begin position="1"/>
        <end position="298"/>
    </location>
</feature>
<feature type="domain" description="Radical SAM core" evidence="2">
    <location>
        <begin position="53"/>
        <end position="269"/>
    </location>
</feature>
<feature type="binding site" evidence="1">
    <location>
        <position position="40"/>
    </location>
    <ligand>
        <name>[4Fe-4S] cluster</name>
        <dbReference type="ChEBI" id="CHEBI:49883"/>
        <label>1</label>
    </ligand>
</feature>
<feature type="binding site" evidence="1">
    <location>
        <position position="45"/>
    </location>
    <ligand>
        <name>[4Fe-4S] cluster</name>
        <dbReference type="ChEBI" id="CHEBI:49883"/>
        <label>1</label>
    </ligand>
</feature>
<feature type="binding site" evidence="1">
    <location>
        <position position="51"/>
    </location>
    <ligand>
        <name>[4Fe-4S] cluster</name>
        <dbReference type="ChEBI" id="CHEBI:49883"/>
        <label>1</label>
    </ligand>
</feature>
<feature type="binding site" evidence="1">
    <location>
        <position position="67"/>
    </location>
    <ligand>
        <name>[4Fe-4S] cluster</name>
        <dbReference type="ChEBI" id="CHEBI:49883"/>
        <label>2</label>
        <note>4Fe-4S-S-AdoMet</note>
    </ligand>
</feature>
<feature type="binding site" evidence="1">
    <location>
        <position position="71"/>
    </location>
    <ligand>
        <name>[4Fe-4S] cluster</name>
        <dbReference type="ChEBI" id="CHEBI:49883"/>
        <label>2</label>
        <note>4Fe-4S-S-AdoMet</note>
    </ligand>
</feature>
<feature type="binding site" evidence="1">
    <location>
        <position position="74"/>
    </location>
    <ligand>
        <name>[4Fe-4S] cluster</name>
        <dbReference type="ChEBI" id="CHEBI:49883"/>
        <label>2</label>
        <note>4Fe-4S-S-AdoMet</note>
    </ligand>
</feature>
<feature type="binding site" evidence="1">
    <location>
        <position position="280"/>
    </location>
    <ligand>
        <name>[4Fe-4S] cluster</name>
        <dbReference type="ChEBI" id="CHEBI:49883"/>
        <label>1</label>
    </ligand>
</feature>